<sequence>MPVEILMPALSPTMEEGTLSKWLKNEGDKVSSGDVIAEIETDKATMEVEAVDEGTIGKLLIAAGTEGVKVNTPIAVLLQDGEAASDIDSMKTEAPKAETPKPAAAEAPAASAAPVAAQPKADVPSDPAIPAGTEMATMTVREALRDAMAEEMRANEDVFVMGEEVAEYQGAYKVTQGLLQEFGARRVVDTPITEHGFAGVGVGAAMTGLRPIVEFMTFNFAMQAIDQIINSAAKTLYMSGGQMGAPIVFRGPSGAAARVAAQHSQCYAAWYSHIPGLKVVMPYTAADAKGLLKAAIRDPNPVIFLENEILYGQSFEVPKLDDFVLPIGKARIHRTGKDATLVSFGIGMTYAIKAAAELEAQGIDVEIIDLRTIRPMDLPTVIESVKKTGRLVTVEEGYPQSSVGTEIATRVMQQAFDYLDAPILTIAGKDVPMPYAANLEKLALPNVAEVVDAVKAVCYK</sequence>
<keyword id="KW-0450">Lipoyl</keyword>
<keyword id="KW-0560">Oxidoreductase</keyword>
<keyword id="KW-0670">Pyruvate</keyword>
<keyword id="KW-1185">Reference proteome</keyword>
<keyword id="KW-0786">Thiamine pyrophosphate</keyword>
<gene>
    <name type="primary">pdhB</name>
    <name type="synonym">pdhAbeta</name>
    <name type="ordered locus">R01446</name>
    <name type="ORF">SMc01031</name>
</gene>
<name>ODPB_RHIME</name>
<dbReference type="EC" id="1.2.4.1"/>
<dbReference type="EMBL" id="AF190792">
    <property type="protein sequence ID" value="AAF04588.1"/>
    <property type="molecule type" value="Genomic_DNA"/>
</dbReference>
<dbReference type="EMBL" id="AL591688">
    <property type="protein sequence ID" value="CAC46025.1"/>
    <property type="molecule type" value="Genomic_DNA"/>
</dbReference>
<dbReference type="RefSeq" id="NP_385552.1">
    <property type="nucleotide sequence ID" value="NC_003047.1"/>
</dbReference>
<dbReference type="RefSeq" id="WP_010969227.1">
    <property type="nucleotide sequence ID" value="NC_003047.1"/>
</dbReference>
<dbReference type="SMR" id="Q9R9N4"/>
<dbReference type="EnsemblBacteria" id="CAC46025">
    <property type="protein sequence ID" value="CAC46025"/>
    <property type="gene ID" value="SMc01031"/>
</dbReference>
<dbReference type="KEGG" id="sme:SMc01031"/>
<dbReference type="PATRIC" id="fig|266834.11.peg.2866"/>
<dbReference type="eggNOG" id="COG0022">
    <property type="taxonomic scope" value="Bacteria"/>
</dbReference>
<dbReference type="eggNOG" id="COG0508">
    <property type="taxonomic scope" value="Bacteria"/>
</dbReference>
<dbReference type="HOGENOM" id="CLU_012907_0_1_5"/>
<dbReference type="OrthoDB" id="9780894at2"/>
<dbReference type="Proteomes" id="UP000001976">
    <property type="component" value="Chromosome"/>
</dbReference>
<dbReference type="GO" id="GO:0004739">
    <property type="term" value="F:pyruvate dehydrogenase (acetyl-transferring) activity"/>
    <property type="evidence" value="ECO:0007669"/>
    <property type="project" value="UniProtKB-EC"/>
</dbReference>
<dbReference type="GO" id="GO:0006086">
    <property type="term" value="P:pyruvate decarboxylation to acetyl-CoA"/>
    <property type="evidence" value="ECO:0007669"/>
    <property type="project" value="InterPro"/>
</dbReference>
<dbReference type="CDD" id="cd06849">
    <property type="entry name" value="lipoyl_domain"/>
    <property type="match status" value="1"/>
</dbReference>
<dbReference type="CDD" id="cd07036">
    <property type="entry name" value="TPP_PYR_E1-PDHc-beta_like"/>
    <property type="match status" value="1"/>
</dbReference>
<dbReference type="FunFam" id="2.40.50.100:FF:000010">
    <property type="entry name" value="Acetyltransferase component of pyruvate dehydrogenase complex"/>
    <property type="match status" value="1"/>
</dbReference>
<dbReference type="FunFam" id="3.40.50.920:FF:000001">
    <property type="entry name" value="Pyruvate dehydrogenase E1 beta subunit"/>
    <property type="match status" value="1"/>
</dbReference>
<dbReference type="FunFam" id="3.40.50.970:FF:000001">
    <property type="entry name" value="Pyruvate dehydrogenase E1 beta subunit"/>
    <property type="match status" value="1"/>
</dbReference>
<dbReference type="Gene3D" id="2.40.50.100">
    <property type="match status" value="1"/>
</dbReference>
<dbReference type="Gene3D" id="3.40.50.920">
    <property type="match status" value="1"/>
</dbReference>
<dbReference type="Gene3D" id="3.40.50.970">
    <property type="match status" value="1"/>
</dbReference>
<dbReference type="InterPro" id="IPR003016">
    <property type="entry name" value="2-oxoA_DH_lipoyl-BS"/>
</dbReference>
<dbReference type="InterPro" id="IPR000089">
    <property type="entry name" value="Biotin_lipoyl"/>
</dbReference>
<dbReference type="InterPro" id="IPR027110">
    <property type="entry name" value="PDHB_mito-type"/>
</dbReference>
<dbReference type="InterPro" id="IPR011053">
    <property type="entry name" value="Single_hybrid_motif"/>
</dbReference>
<dbReference type="InterPro" id="IPR029061">
    <property type="entry name" value="THDP-binding"/>
</dbReference>
<dbReference type="InterPro" id="IPR009014">
    <property type="entry name" value="Transketo_C/PFOR_II"/>
</dbReference>
<dbReference type="InterPro" id="IPR005475">
    <property type="entry name" value="Transketolase-like_Pyr-bd"/>
</dbReference>
<dbReference type="InterPro" id="IPR033248">
    <property type="entry name" value="Transketolase_C"/>
</dbReference>
<dbReference type="NCBIfam" id="NF006667">
    <property type="entry name" value="PRK09212.1"/>
    <property type="match status" value="1"/>
</dbReference>
<dbReference type="NCBIfam" id="NF008854">
    <property type="entry name" value="PRK11892.1"/>
    <property type="match status" value="1"/>
</dbReference>
<dbReference type="PANTHER" id="PTHR11624">
    <property type="entry name" value="DEHYDROGENASE RELATED"/>
    <property type="match status" value="1"/>
</dbReference>
<dbReference type="PANTHER" id="PTHR11624:SF96">
    <property type="entry name" value="PYRUVATE DEHYDROGENASE E1 COMPONENT SUBUNIT BETA, MITOCHONDRIAL"/>
    <property type="match status" value="1"/>
</dbReference>
<dbReference type="Pfam" id="PF00364">
    <property type="entry name" value="Biotin_lipoyl"/>
    <property type="match status" value="1"/>
</dbReference>
<dbReference type="Pfam" id="PF02779">
    <property type="entry name" value="Transket_pyr"/>
    <property type="match status" value="1"/>
</dbReference>
<dbReference type="Pfam" id="PF02780">
    <property type="entry name" value="Transketolase_C"/>
    <property type="match status" value="1"/>
</dbReference>
<dbReference type="SMART" id="SM00861">
    <property type="entry name" value="Transket_pyr"/>
    <property type="match status" value="1"/>
</dbReference>
<dbReference type="SUPFAM" id="SSF51230">
    <property type="entry name" value="Single hybrid motif"/>
    <property type="match status" value="1"/>
</dbReference>
<dbReference type="SUPFAM" id="SSF52518">
    <property type="entry name" value="Thiamin diphosphate-binding fold (THDP-binding)"/>
    <property type="match status" value="1"/>
</dbReference>
<dbReference type="SUPFAM" id="SSF52922">
    <property type="entry name" value="TK C-terminal domain-like"/>
    <property type="match status" value="1"/>
</dbReference>
<dbReference type="PROSITE" id="PS50968">
    <property type="entry name" value="BIOTINYL_LIPOYL"/>
    <property type="match status" value="1"/>
</dbReference>
<dbReference type="PROSITE" id="PS00189">
    <property type="entry name" value="LIPOYL"/>
    <property type="match status" value="1"/>
</dbReference>
<reference key="1">
    <citation type="journal article" date="2000" name="Mol. Plant Microbe Interact.">
        <title>Symbiotic induction of pyruvate dehydrogenase genes from Sinorhizobium meliloti.</title>
        <authorList>
            <person name="Cabanes D."/>
            <person name="Boistard P."/>
            <person name="Batut J."/>
        </authorList>
    </citation>
    <scope>NUCLEOTIDE SEQUENCE [GENOMIC DNA]</scope>
    <source>
        <strain>RCR2011 / SU47</strain>
    </source>
</reference>
<reference key="2">
    <citation type="journal article" date="2001" name="Proc. Natl. Acad. Sci. U.S.A.">
        <title>Analysis of the chromosome sequence of the legume symbiont Sinorhizobium meliloti strain 1021.</title>
        <authorList>
            <person name="Capela D."/>
            <person name="Barloy-Hubler F."/>
            <person name="Gouzy J."/>
            <person name="Bothe G."/>
            <person name="Ampe F."/>
            <person name="Batut J."/>
            <person name="Boistard P."/>
            <person name="Becker A."/>
            <person name="Boutry M."/>
            <person name="Cadieu E."/>
            <person name="Dreano S."/>
            <person name="Gloux S."/>
            <person name="Godrie T."/>
            <person name="Goffeau A."/>
            <person name="Kahn D."/>
            <person name="Kiss E."/>
            <person name="Lelaure V."/>
            <person name="Masuy D."/>
            <person name="Pohl T."/>
            <person name="Portetelle D."/>
            <person name="Puehler A."/>
            <person name="Purnelle B."/>
            <person name="Ramsperger U."/>
            <person name="Renard C."/>
            <person name="Thebault P."/>
            <person name="Vandenbol M."/>
            <person name="Weidner S."/>
            <person name="Galibert F."/>
        </authorList>
    </citation>
    <scope>NUCLEOTIDE SEQUENCE [LARGE SCALE GENOMIC DNA]</scope>
    <source>
        <strain>1021</strain>
    </source>
</reference>
<reference key="3">
    <citation type="journal article" date="2001" name="Science">
        <title>The composite genome of the legume symbiont Sinorhizobium meliloti.</title>
        <authorList>
            <person name="Galibert F."/>
            <person name="Finan T.M."/>
            <person name="Long S.R."/>
            <person name="Puehler A."/>
            <person name="Abola P."/>
            <person name="Ampe F."/>
            <person name="Barloy-Hubler F."/>
            <person name="Barnett M.J."/>
            <person name="Becker A."/>
            <person name="Boistard P."/>
            <person name="Bothe G."/>
            <person name="Boutry M."/>
            <person name="Bowser L."/>
            <person name="Buhrmester J."/>
            <person name="Cadieu E."/>
            <person name="Capela D."/>
            <person name="Chain P."/>
            <person name="Cowie A."/>
            <person name="Davis R.W."/>
            <person name="Dreano S."/>
            <person name="Federspiel N.A."/>
            <person name="Fisher R.F."/>
            <person name="Gloux S."/>
            <person name="Godrie T."/>
            <person name="Goffeau A."/>
            <person name="Golding B."/>
            <person name="Gouzy J."/>
            <person name="Gurjal M."/>
            <person name="Hernandez-Lucas I."/>
            <person name="Hong A."/>
            <person name="Huizar L."/>
            <person name="Hyman R.W."/>
            <person name="Jones T."/>
            <person name="Kahn D."/>
            <person name="Kahn M.L."/>
            <person name="Kalman S."/>
            <person name="Keating D.H."/>
            <person name="Kiss E."/>
            <person name="Komp C."/>
            <person name="Lelaure V."/>
            <person name="Masuy D."/>
            <person name="Palm C."/>
            <person name="Peck M.C."/>
            <person name="Pohl T.M."/>
            <person name="Portetelle D."/>
            <person name="Purnelle B."/>
            <person name="Ramsperger U."/>
            <person name="Surzycki R."/>
            <person name="Thebault P."/>
            <person name="Vandenbol M."/>
            <person name="Vorhoelter F.J."/>
            <person name="Weidner S."/>
            <person name="Wells D.H."/>
            <person name="Wong K."/>
            <person name="Yeh K.-C."/>
            <person name="Batut J."/>
        </authorList>
    </citation>
    <scope>NUCLEOTIDE SEQUENCE [LARGE SCALE GENOMIC DNA]</scope>
    <source>
        <strain>1021</strain>
    </source>
</reference>
<organism>
    <name type="scientific">Rhizobium meliloti (strain 1021)</name>
    <name type="common">Ensifer meliloti</name>
    <name type="synonym">Sinorhizobium meliloti</name>
    <dbReference type="NCBI Taxonomy" id="266834"/>
    <lineage>
        <taxon>Bacteria</taxon>
        <taxon>Pseudomonadati</taxon>
        <taxon>Pseudomonadota</taxon>
        <taxon>Alphaproteobacteria</taxon>
        <taxon>Hyphomicrobiales</taxon>
        <taxon>Rhizobiaceae</taxon>
        <taxon>Sinorhizobium/Ensifer group</taxon>
        <taxon>Sinorhizobium</taxon>
    </lineage>
</organism>
<accession>Q9R9N4</accession>
<proteinExistence type="inferred from homology"/>
<evidence type="ECO:0000250" key="1"/>
<evidence type="ECO:0000255" key="2">
    <source>
        <dbReference type="PROSITE-ProRule" id="PRU01066"/>
    </source>
</evidence>
<evidence type="ECO:0000256" key="3">
    <source>
        <dbReference type="SAM" id="MobiDB-lite"/>
    </source>
</evidence>
<evidence type="ECO:0000305" key="4"/>
<feature type="chain" id="PRO_0000162225" description="Pyruvate dehydrogenase E1 component subunit beta">
    <location>
        <begin position="1"/>
        <end position="460"/>
    </location>
</feature>
<feature type="domain" description="Lipoyl-binding" evidence="2">
    <location>
        <begin position="2"/>
        <end position="78"/>
    </location>
</feature>
<feature type="region of interest" description="Disordered" evidence="3">
    <location>
        <begin position="91"/>
        <end position="131"/>
    </location>
</feature>
<feature type="compositionally biased region" description="Low complexity" evidence="3">
    <location>
        <begin position="100"/>
        <end position="121"/>
    </location>
</feature>
<feature type="binding site" evidence="1">
    <location>
        <position position="194"/>
    </location>
    <ligand>
        <name>thiamine diphosphate</name>
        <dbReference type="ChEBI" id="CHEBI:58937"/>
    </ligand>
</feature>
<feature type="modified residue" description="N6-lipoyllysine" evidence="2">
    <location>
        <position position="43"/>
    </location>
</feature>
<feature type="sequence conflict" description="In Ref. 1; AAF04588." evidence="4" ref="1">
    <original>E</original>
    <variation>K</variation>
    <location>
        <position position="53"/>
    </location>
</feature>
<protein>
    <recommendedName>
        <fullName>Pyruvate dehydrogenase E1 component subunit beta</fullName>
        <ecNumber>1.2.4.1</ecNumber>
    </recommendedName>
</protein>
<comment type="function">
    <text evidence="1">The pyruvate dehydrogenase complex catalyzes the overall conversion of pyruvate to acetyl-CoA and CO(2). It contains multiple copies of three enzymatic components: pyruvate dehydrogenase (E1), dihydrolipoamide acetyltransferase (E2) and lipoamide dehydrogenase (E3) (By similarity).</text>
</comment>
<comment type="catalytic activity">
    <reaction>
        <text>N(6)-[(R)-lipoyl]-L-lysyl-[protein] + pyruvate + H(+) = N(6)-[(R)-S(8)-acetyldihydrolipoyl]-L-lysyl-[protein] + CO2</text>
        <dbReference type="Rhea" id="RHEA:19189"/>
        <dbReference type="Rhea" id="RHEA-COMP:10474"/>
        <dbReference type="Rhea" id="RHEA-COMP:10478"/>
        <dbReference type="ChEBI" id="CHEBI:15361"/>
        <dbReference type="ChEBI" id="CHEBI:15378"/>
        <dbReference type="ChEBI" id="CHEBI:16526"/>
        <dbReference type="ChEBI" id="CHEBI:83099"/>
        <dbReference type="ChEBI" id="CHEBI:83111"/>
        <dbReference type="EC" id="1.2.4.1"/>
    </reaction>
</comment>
<comment type="cofactor">
    <cofactor evidence="1">
        <name>(R)-lipoate</name>
        <dbReference type="ChEBI" id="CHEBI:83088"/>
    </cofactor>
    <text evidence="1">Binds 1 lipoyl cofactor covalently.</text>
</comment>
<comment type="cofactor">
    <cofactor evidence="1">
        <name>thiamine diphosphate</name>
        <dbReference type="ChEBI" id="CHEBI:58937"/>
    </cofactor>
    <text evidence="1">Binds 1 thiamine pyrophosphate per subunit.</text>
</comment>
<comment type="subunit">
    <text>Heterodimer of an alpha and a beta chain.</text>
</comment>